<sequence length="290" mass="32597">MSEKLQKVLARAGHGSRREIESIIEAGRVSVDGKIAKLGDRVEVTPGLKIRIDGHLISVRESAEQICRVLAYYKPEGELCTRNDPEGRPTVFDRLPKLRGARWIAVGRLDVNTCGLLLFTTDGELANRLMHPSREVEREYAVRVFGQVDDAKLRDLSRGVQLEDGPAAFKTIKFSGGEGINQWYNVTLTEGRNREVRRLWEAVGVQVSRLIRVRYGDIPLPKGLPRGGWTELDLAQTNYLRELVELPPETSSKVAVEKDRRRMKANQIRRAVKRHSQVSGGRRSGGRNNG</sequence>
<evidence type="ECO:0000250" key="1"/>
<evidence type="ECO:0000255" key="2">
    <source>
        <dbReference type="PROSITE-ProRule" id="PRU00182"/>
    </source>
</evidence>
<evidence type="ECO:0000256" key="3">
    <source>
        <dbReference type="SAM" id="MobiDB-lite"/>
    </source>
</evidence>
<evidence type="ECO:0000305" key="4"/>
<dbReference type="EC" id="5.4.99.22"/>
<dbReference type="EMBL" id="AE005174">
    <property type="protein sequence ID" value="AAG56546.1"/>
    <property type="molecule type" value="Genomic_DNA"/>
</dbReference>
<dbReference type="EMBL" id="BA000007">
    <property type="protein sequence ID" value="BAB35264.1"/>
    <property type="molecule type" value="Genomic_DNA"/>
</dbReference>
<dbReference type="PIR" id="A99859">
    <property type="entry name" value="A99859"/>
</dbReference>
<dbReference type="PIR" id="F85760">
    <property type="entry name" value="F85760"/>
</dbReference>
<dbReference type="RefSeq" id="NP_309868.1">
    <property type="nucleotide sequence ID" value="NC_002695.1"/>
</dbReference>
<dbReference type="RefSeq" id="WP_001291216.1">
    <property type="nucleotide sequence ID" value="NZ_VOAI01000015.1"/>
</dbReference>
<dbReference type="SMR" id="Q8X4Q8"/>
<dbReference type="STRING" id="155864.Z2541"/>
<dbReference type="GeneID" id="912836"/>
<dbReference type="GeneID" id="93775388"/>
<dbReference type="KEGG" id="ece:Z2541"/>
<dbReference type="KEGG" id="ecs:ECs_1841"/>
<dbReference type="PATRIC" id="fig|386585.9.peg.1939"/>
<dbReference type="eggNOG" id="COG1187">
    <property type="taxonomic scope" value="Bacteria"/>
</dbReference>
<dbReference type="HOGENOM" id="CLU_024979_1_1_6"/>
<dbReference type="OMA" id="EWINNGW"/>
<dbReference type="Proteomes" id="UP000000558">
    <property type="component" value="Chromosome"/>
</dbReference>
<dbReference type="Proteomes" id="UP000002519">
    <property type="component" value="Chromosome"/>
</dbReference>
<dbReference type="GO" id="GO:0160139">
    <property type="term" value="F:23S rRNA pseudouridine(2605) synthase activity"/>
    <property type="evidence" value="ECO:0007669"/>
    <property type="project" value="UniProtKB-EC"/>
</dbReference>
<dbReference type="GO" id="GO:0003723">
    <property type="term" value="F:RNA binding"/>
    <property type="evidence" value="ECO:0007669"/>
    <property type="project" value="UniProtKB-KW"/>
</dbReference>
<dbReference type="GO" id="GO:0000455">
    <property type="term" value="P:enzyme-directed rRNA pseudouridine synthesis"/>
    <property type="evidence" value="ECO:0007669"/>
    <property type="project" value="UniProtKB-ARBA"/>
</dbReference>
<dbReference type="CDD" id="cd02556">
    <property type="entry name" value="PseudoU_synth_RluB"/>
    <property type="match status" value="1"/>
</dbReference>
<dbReference type="CDD" id="cd00165">
    <property type="entry name" value="S4"/>
    <property type="match status" value="1"/>
</dbReference>
<dbReference type="FunFam" id="3.10.290.10:FF:000003">
    <property type="entry name" value="Pseudouridine synthase"/>
    <property type="match status" value="1"/>
</dbReference>
<dbReference type="FunFam" id="3.30.2350.10:FF:000002">
    <property type="entry name" value="Pseudouridine synthase"/>
    <property type="match status" value="1"/>
</dbReference>
<dbReference type="FunFam" id="3.30.70.1560:FF:000001">
    <property type="entry name" value="Pseudouridine synthase"/>
    <property type="match status" value="1"/>
</dbReference>
<dbReference type="FunFam" id="3.30.70.580:FF:000009">
    <property type="entry name" value="Pseudouridine synthase"/>
    <property type="match status" value="1"/>
</dbReference>
<dbReference type="Gene3D" id="3.30.2350.10">
    <property type="entry name" value="Pseudouridine synthase"/>
    <property type="match status" value="1"/>
</dbReference>
<dbReference type="Gene3D" id="3.10.290.10">
    <property type="entry name" value="RNA-binding S4 domain"/>
    <property type="match status" value="1"/>
</dbReference>
<dbReference type="InterPro" id="IPR020103">
    <property type="entry name" value="PsdUridine_synth_cat_dom_sf"/>
</dbReference>
<dbReference type="InterPro" id="IPR006145">
    <property type="entry name" value="PsdUridine_synth_RsuA/RluA"/>
</dbReference>
<dbReference type="InterPro" id="IPR000748">
    <property type="entry name" value="PsdUridine_synth_RsuA/RluB/E/F"/>
</dbReference>
<dbReference type="InterPro" id="IPR018496">
    <property type="entry name" value="PsdUridine_synth_RsuA/RluB_CS"/>
</dbReference>
<dbReference type="InterPro" id="IPR050343">
    <property type="entry name" value="RsuA_PseudoU_synthase"/>
</dbReference>
<dbReference type="InterPro" id="IPR002942">
    <property type="entry name" value="S4_RNA-bd"/>
</dbReference>
<dbReference type="InterPro" id="IPR036986">
    <property type="entry name" value="S4_RNA-bd_sf"/>
</dbReference>
<dbReference type="NCBIfam" id="NF007976">
    <property type="entry name" value="PRK10700.1"/>
    <property type="match status" value="1"/>
</dbReference>
<dbReference type="NCBIfam" id="TIGR00093">
    <property type="entry name" value="pseudouridine synthase"/>
    <property type="match status" value="1"/>
</dbReference>
<dbReference type="PANTHER" id="PTHR47683">
    <property type="entry name" value="PSEUDOURIDINE SYNTHASE FAMILY PROTEIN-RELATED"/>
    <property type="match status" value="1"/>
</dbReference>
<dbReference type="PANTHER" id="PTHR47683:SF3">
    <property type="entry name" value="RIBOSOMAL LARGE SUBUNIT PSEUDOURIDINE SYNTHASE B"/>
    <property type="match status" value="1"/>
</dbReference>
<dbReference type="Pfam" id="PF00849">
    <property type="entry name" value="PseudoU_synth_2"/>
    <property type="match status" value="1"/>
</dbReference>
<dbReference type="Pfam" id="PF01479">
    <property type="entry name" value="S4"/>
    <property type="match status" value="1"/>
</dbReference>
<dbReference type="SMART" id="SM00363">
    <property type="entry name" value="S4"/>
    <property type="match status" value="1"/>
</dbReference>
<dbReference type="SUPFAM" id="SSF55174">
    <property type="entry name" value="Alpha-L RNA-binding motif"/>
    <property type="match status" value="1"/>
</dbReference>
<dbReference type="SUPFAM" id="SSF55120">
    <property type="entry name" value="Pseudouridine synthase"/>
    <property type="match status" value="1"/>
</dbReference>
<dbReference type="PROSITE" id="PS01149">
    <property type="entry name" value="PSI_RSU"/>
    <property type="match status" value="1"/>
</dbReference>
<dbReference type="PROSITE" id="PS50889">
    <property type="entry name" value="S4"/>
    <property type="match status" value="1"/>
</dbReference>
<gene>
    <name type="primary">rluB</name>
    <name type="ordered locus">Z2541</name>
    <name type="ordered locus">ECs1841</name>
</gene>
<reference key="1">
    <citation type="journal article" date="2001" name="Nature">
        <title>Genome sequence of enterohaemorrhagic Escherichia coli O157:H7.</title>
        <authorList>
            <person name="Perna N.T."/>
            <person name="Plunkett G. III"/>
            <person name="Burland V."/>
            <person name="Mau B."/>
            <person name="Glasner J.D."/>
            <person name="Rose D.J."/>
            <person name="Mayhew G.F."/>
            <person name="Evans P.S."/>
            <person name="Gregor J."/>
            <person name="Kirkpatrick H.A."/>
            <person name="Posfai G."/>
            <person name="Hackett J."/>
            <person name="Klink S."/>
            <person name="Boutin A."/>
            <person name="Shao Y."/>
            <person name="Miller L."/>
            <person name="Grotbeck E.J."/>
            <person name="Davis N.W."/>
            <person name="Lim A."/>
            <person name="Dimalanta E.T."/>
            <person name="Potamousis K."/>
            <person name="Apodaca J."/>
            <person name="Anantharaman T.S."/>
            <person name="Lin J."/>
            <person name="Yen G."/>
            <person name="Schwartz D.C."/>
            <person name="Welch R.A."/>
            <person name="Blattner F.R."/>
        </authorList>
    </citation>
    <scope>NUCLEOTIDE SEQUENCE [LARGE SCALE GENOMIC DNA]</scope>
    <source>
        <strain>O157:H7 / EDL933 / ATCC 700927 / EHEC</strain>
    </source>
</reference>
<reference key="2">
    <citation type="journal article" date="2001" name="DNA Res.">
        <title>Complete genome sequence of enterohemorrhagic Escherichia coli O157:H7 and genomic comparison with a laboratory strain K-12.</title>
        <authorList>
            <person name="Hayashi T."/>
            <person name="Makino K."/>
            <person name="Ohnishi M."/>
            <person name="Kurokawa K."/>
            <person name="Ishii K."/>
            <person name="Yokoyama K."/>
            <person name="Han C.-G."/>
            <person name="Ohtsubo E."/>
            <person name="Nakayama K."/>
            <person name="Murata T."/>
            <person name="Tanaka M."/>
            <person name="Tobe T."/>
            <person name="Iida T."/>
            <person name="Takami H."/>
            <person name="Honda T."/>
            <person name="Sasakawa C."/>
            <person name="Ogasawara N."/>
            <person name="Yasunaga T."/>
            <person name="Kuhara S."/>
            <person name="Shiba T."/>
            <person name="Hattori M."/>
            <person name="Shinagawa H."/>
        </authorList>
    </citation>
    <scope>NUCLEOTIDE SEQUENCE [LARGE SCALE GENOMIC DNA]</scope>
    <source>
        <strain>O157:H7 / Sakai / RIMD 0509952 / EHEC</strain>
    </source>
</reference>
<feature type="chain" id="PRO_0000099985" description="Ribosomal large subunit pseudouridine synthase B">
    <location>
        <begin position="1"/>
        <end position="290"/>
    </location>
</feature>
<feature type="domain" description="S4 RNA-binding" evidence="2">
    <location>
        <begin position="3"/>
        <end position="75"/>
    </location>
</feature>
<feature type="region of interest" description="Disordered" evidence="3">
    <location>
        <begin position="256"/>
        <end position="290"/>
    </location>
</feature>
<feature type="active site" description="Nucleophile" evidence="1">
    <location>
        <position position="110"/>
    </location>
</feature>
<protein>
    <recommendedName>
        <fullName>Ribosomal large subunit pseudouridine synthase B</fullName>
        <ecNumber>5.4.99.22</ecNumber>
    </recommendedName>
    <alternativeName>
        <fullName>23S rRNA pseudouridine(2605) synthase</fullName>
    </alternativeName>
    <alternativeName>
        <fullName>rRNA pseudouridylate synthase B</fullName>
    </alternativeName>
    <alternativeName>
        <fullName>rRNA-uridine isomerase B</fullName>
    </alternativeName>
</protein>
<proteinExistence type="inferred from homology"/>
<keyword id="KW-0413">Isomerase</keyword>
<keyword id="KW-1185">Reference proteome</keyword>
<keyword id="KW-0694">RNA-binding</keyword>
<keyword id="KW-0698">rRNA processing</keyword>
<organism>
    <name type="scientific">Escherichia coli O157:H7</name>
    <dbReference type="NCBI Taxonomy" id="83334"/>
    <lineage>
        <taxon>Bacteria</taxon>
        <taxon>Pseudomonadati</taxon>
        <taxon>Pseudomonadota</taxon>
        <taxon>Gammaproteobacteria</taxon>
        <taxon>Enterobacterales</taxon>
        <taxon>Enterobacteriaceae</taxon>
        <taxon>Escherichia</taxon>
    </lineage>
</organism>
<comment type="function">
    <text evidence="1">Responsible for synthesis of pseudouridine from uracil-2605 in 23S ribosomal RNA.</text>
</comment>
<comment type="catalytic activity">
    <reaction>
        <text>uridine(2605) in 23S rRNA = pseudouridine(2605) in 23S rRNA</text>
        <dbReference type="Rhea" id="RHEA:42520"/>
        <dbReference type="Rhea" id="RHEA-COMP:10095"/>
        <dbReference type="Rhea" id="RHEA-COMP:10096"/>
        <dbReference type="ChEBI" id="CHEBI:65314"/>
        <dbReference type="ChEBI" id="CHEBI:65315"/>
        <dbReference type="EC" id="5.4.99.22"/>
    </reaction>
</comment>
<comment type="similarity">
    <text evidence="4">Belongs to the pseudouridine synthase RsuA family.</text>
</comment>
<name>RLUB_ECO57</name>
<accession>Q8X4Q8</accession>